<accession>O29527</accession>
<comment type="function">
    <text evidence="1">Probably part of an ABC transporter complex. Responsible for energy coupling to the transport system (By similarity).</text>
</comment>
<comment type="subcellular location">
    <subcellularLocation>
        <location evidence="1">Cell membrane</location>
        <topology evidence="1">Peripheral membrane protein</topology>
    </subcellularLocation>
</comment>
<comment type="similarity">
    <text evidence="3">Belongs to the ABC transporter superfamily.</text>
</comment>
<comment type="sequence caution" evidence="3">
    <conflict type="erroneous initiation">
        <sequence resource="EMBL-CDS" id="AAB90507"/>
    </conflict>
</comment>
<organism>
    <name type="scientific">Archaeoglobus fulgidus (strain ATCC 49558 / DSM 4304 / JCM 9628 / NBRC 100126 / VC-16)</name>
    <dbReference type="NCBI Taxonomy" id="224325"/>
    <lineage>
        <taxon>Archaea</taxon>
        <taxon>Methanobacteriati</taxon>
        <taxon>Methanobacteriota</taxon>
        <taxon>Archaeoglobi</taxon>
        <taxon>Archaeoglobales</taxon>
        <taxon>Archaeoglobaceae</taxon>
        <taxon>Archaeoglobus</taxon>
    </lineage>
</organism>
<name>Y731_ARCFU</name>
<feature type="chain" id="PRO_0000092129" description="Putative ABC transporter ATP-binding protein AF_0731">
    <location>
        <begin position="1"/>
        <end position="293"/>
    </location>
</feature>
<feature type="domain" description="ABC transporter" evidence="2">
    <location>
        <begin position="2"/>
        <end position="236"/>
    </location>
</feature>
<feature type="binding site" evidence="2">
    <location>
        <begin position="34"/>
        <end position="41"/>
    </location>
    <ligand>
        <name>ATP</name>
        <dbReference type="ChEBI" id="CHEBI:30616"/>
    </ligand>
</feature>
<sequence length="293" mass="32858">MIEAVDLHFCYGDAEVLKGVNFKAERGKVTVLMGRNGAGKTTLLKHLNGLLRPKSGKVIIDGRELKYDRKSLLEVRKRVFYVFQNPDDQILSPTVWQDVAFGPRNLGLKGERLERVVRNALEAVGLSGYEKRLCSTLSGGEKRRLAIASALAMNPDYCIMDEPSANVDGEGLRMIAEIIRKLREEGKGVVVSTHDADLAKEVGDYFYFMDDGKIVWEGEEFSYSVARKLGIRSFSLGKVILAESKIDDHPCFSADELERAVLKAFEGETVVVLGRDDWVIKELEKYPLEVERL</sequence>
<evidence type="ECO:0000250" key="1"/>
<evidence type="ECO:0000255" key="2">
    <source>
        <dbReference type="PROSITE-ProRule" id="PRU00434"/>
    </source>
</evidence>
<evidence type="ECO:0000305" key="3"/>
<keyword id="KW-0067">ATP-binding</keyword>
<keyword id="KW-1003">Cell membrane</keyword>
<keyword id="KW-0472">Membrane</keyword>
<keyword id="KW-0547">Nucleotide-binding</keyword>
<keyword id="KW-1185">Reference proteome</keyword>
<keyword id="KW-1278">Translocase</keyword>
<keyword id="KW-0813">Transport</keyword>
<reference key="1">
    <citation type="journal article" date="1997" name="Nature">
        <title>The complete genome sequence of the hyperthermophilic, sulphate-reducing archaeon Archaeoglobus fulgidus.</title>
        <authorList>
            <person name="Klenk H.-P."/>
            <person name="Clayton R.A."/>
            <person name="Tomb J.-F."/>
            <person name="White O."/>
            <person name="Nelson K.E."/>
            <person name="Ketchum K.A."/>
            <person name="Dodson R.J."/>
            <person name="Gwinn M.L."/>
            <person name="Hickey E.K."/>
            <person name="Peterson J.D."/>
            <person name="Richardson D.L."/>
            <person name="Kerlavage A.R."/>
            <person name="Graham D.E."/>
            <person name="Kyrpides N.C."/>
            <person name="Fleischmann R.D."/>
            <person name="Quackenbush J."/>
            <person name="Lee N.H."/>
            <person name="Sutton G.G."/>
            <person name="Gill S.R."/>
            <person name="Kirkness E.F."/>
            <person name="Dougherty B.A."/>
            <person name="McKenney K."/>
            <person name="Adams M.D."/>
            <person name="Loftus B.J."/>
            <person name="Peterson S.N."/>
            <person name="Reich C.I."/>
            <person name="McNeil L.K."/>
            <person name="Badger J.H."/>
            <person name="Glodek A."/>
            <person name="Zhou L."/>
            <person name="Overbeek R."/>
            <person name="Gocayne J.D."/>
            <person name="Weidman J.F."/>
            <person name="McDonald L.A."/>
            <person name="Utterback T.R."/>
            <person name="Cotton M.D."/>
            <person name="Spriggs T."/>
            <person name="Artiach P."/>
            <person name="Kaine B.P."/>
            <person name="Sykes S.M."/>
            <person name="Sadow P.W."/>
            <person name="D'Andrea K.P."/>
            <person name="Bowman C."/>
            <person name="Fujii C."/>
            <person name="Garland S.A."/>
            <person name="Mason T.M."/>
            <person name="Olsen G.J."/>
            <person name="Fraser C.M."/>
            <person name="Smith H.O."/>
            <person name="Woese C.R."/>
            <person name="Venter J.C."/>
        </authorList>
    </citation>
    <scope>NUCLEOTIDE SEQUENCE [LARGE SCALE GENOMIC DNA]</scope>
    <source>
        <strain>ATCC 49558 / DSM 4304 / JCM 9628 / NBRC 100126 / VC-16</strain>
    </source>
</reference>
<dbReference type="EC" id="7.-.-.-"/>
<dbReference type="EMBL" id="AE000782">
    <property type="protein sequence ID" value="AAB90507.1"/>
    <property type="status" value="ALT_INIT"/>
    <property type="molecule type" value="Genomic_DNA"/>
</dbReference>
<dbReference type="PIR" id="C69341">
    <property type="entry name" value="C69341"/>
</dbReference>
<dbReference type="RefSeq" id="WP_048064275.1">
    <property type="nucleotide sequence ID" value="NC_000917.1"/>
</dbReference>
<dbReference type="SMR" id="O29527"/>
<dbReference type="STRING" id="224325.AF_0731"/>
<dbReference type="PaxDb" id="224325-AF_0731"/>
<dbReference type="EnsemblBacteria" id="AAB90507">
    <property type="protein sequence ID" value="AAB90507"/>
    <property type="gene ID" value="AF_0731"/>
</dbReference>
<dbReference type="KEGG" id="afu:AF_0731"/>
<dbReference type="eggNOG" id="arCOG00202">
    <property type="taxonomic scope" value="Archaea"/>
</dbReference>
<dbReference type="HOGENOM" id="CLU_000604_13_2_2"/>
<dbReference type="OrthoDB" id="18209at2157"/>
<dbReference type="PhylomeDB" id="O29527"/>
<dbReference type="Proteomes" id="UP000002199">
    <property type="component" value="Chromosome"/>
</dbReference>
<dbReference type="GO" id="GO:0043190">
    <property type="term" value="C:ATP-binding cassette (ABC) transporter complex"/>
    <property type="evidence" value="ECO:0007669"/>
    <property type="project" value="TreeGrafter"/>
</dbReference>
<dbReference type="GO" id="GO:0005524">
    <property type="term" value="F:ATP binding"/>
    <property type="evidence" value="ECO:0007669"/>
    <property type="project" value="UniProtKB-KW"/>
</dbReference>
<dbReference type="GO" id="GO:0016887">
    <property type="term" value="F:ATP hydrolysis activity"/>
    <property type="evidence" value="ECO:0007669"/>
    <property type="project" value="InterPro"/>
</dbReference>
<dbReference type="GO" id="GO:0042626">
    <property type="term" value="F:ATPase-coupled transmembrane transporter activity"/>
    <property type="evidence" value="ECO:0007669"/>
    <property type="project" value="TreeGrafter"/>
</dbReference>
<dbReference type="GO" id="GO:0006824">
    <property type="term" value="P:cobalt ion transport"/>
    <property type="evidence" value="ECO:0007669"/>
    <property type="project" value="InterPro"/>
</dbReference>
<dbReference type="CDD" id="cd03225">
    <property type="entry name" value="ABC_cobalt_CbiO_domain1"/>
    <property type="match status" value="1"/>
</dbReference>
<dbReference type="FunFam" id="3.40.50.300:FF:000224">
    <property type="entry name" value="Energy-coupling factor transporter ATP-binding protein EcfA"/>
    <property type="match status" value="1"/>
</dbReference>
<dbReference type="Gene3D" id="3.40.50.300">
    <property type="entry name" value="P-loop containing nucleotide triphosphate hydrolases"/>
    <property type="match status" value="1"/>
</dbReference>
<dbReference type="InterPro" id="IPR003593">
    <property type="entry name" value="AAA+_ATPase"/>
</dbReference>
<dbReference type="InterPro" id="IPR003439">
    <property type="entry name" value="ABC_transporter-like_ATP-bd"/>
</dbReference>
<dbReference type="InterPro" id="IPR017871">
    <property type="entry name" value="ABC_transporter-like_CS"/>
</dbReference>
<dbReference type="InterPro" id="IPR015856">
    <property type="entry name" value="ABC_transpr_CbiO/EcfA_su"/>
</dbReference>
<dbReference type="InterPro" id="IPR005876">
    <property type="entry name" value="Co_trans_ATP-bd"/>
</dbReference>
<dbReference type="InterPro" id="IPR050095">
    <property type="entry name" value="ECF_ABC_transporter_ATP-bd"/>
</dbReference>
<dbReference type="InterPro" id="IPR027417">
    <property type="entry name" value="P-loop_NTPase"/>
</dbReference>
<dbReference type="NCBIfam" id="TIGR01166">
    <property type="entry name" value="cbiO"/>
    <property type="match status" value="1"/>
</dbReference>
<dbReference type="PANTHER" id="PTHR43553:SF24">
    <property type="entry name" value="ENERGY-COUPLING FACTOR TRANSPORTER ATP-BINDING PROTEIN ECFA1"/>
    <property type="match status" value="1"/>
</dbReference>
<dbReference type="PANTHER" id="PTHR43553">
    <property type="entry name" value="HEAVY METAL TRANSPORTER"/>
    <property type="match status" value="1"/>
</dbReference>
<dbReference type="Pfam" id="PF00005">
    <property type="entry name" value="ABC_tran"/>
    <property type="match status" value="1"/>
</dbReference>
<dbReference type="SMART" id="SM00382">
    <property type="entry name" value="AAA"/>
    <property type="match status" value="1"/>
</dbReference>
<dbReference type="SUPFAM" id="SSF52540">
    <property type="entry name" value="P-loop containing nucleoside triphosphate hydrolases"/>
    <property type="match status" value="1"/>
</dbReference>
<dbReference type="PROSITE" id="PS00211">
    <property type="entry name" value="ABC_TRANSPORTER_1"/>
    <property type="match status" value="1"/>
</dbReference>
<dbReference type="PROSITE" id="PS50893">
    <property type="entry name" value="ABC_TRANSPORTER_2"/>
    <property type="match status" value="1"/>
</dbReference>
<protein>
    <recommendedName>
        <fullName>Putative ABC transporter ATP-binding protein AF_0731</fullName>
        <ecNumber>7.-.-.-</ecNumber>
    </recommendedName>
</protein>
<gene>
    <name type="ordered locus">AF_0731</name>
</gene>
<proteinExistence type="inferred from homology"/>